<dbReference type="EC" id="2.6.1.11" evidence="2"/>
<dbReference type="EC" id="2.6.1.17" evidence="2"/>
<dbReference type="EMBL" id="AE005174">
    <property type="protein sequence ID" value="AAG58467.1"/>
    <property type="molecule type" value="Genomic_DNA"/>
</dbReference>
<dbReference type="EMBL" id="BA000007">
    <property type="protein sequence ID" value="BAB37633.1"/>
    <property type="molecule type" value="Genomic_DNA"/>
</dbReference>
<dbReference type="PIR" id="B91155">
    <property type="entry name" value="B91155"/>
</dbReference>
<dbReference type="PIR" id="G86000">
    <property type="entry name" value="G86000"/>
</dbReference>
<dbReference type="RefSeq" id="NP_312237.1">
    <property type="nucleotide sequence ID" value="NC_002695.1"/>
</dbReference>
<dbReference type="RefSeq" id="WP_000963819.1">
    <property type="nucleotide sequence ID" value="NZ_VOAI01000004.1"/>
</dbReference>
<dbReference type="SMR" id="Q8X4S6"/>
<dbReference type="STRING" id="155864.Z4720"/>
<dbReference type="GeneID" id="915934"/>
<dbReference type="KEGG" id="ece:Z4720"/>
<dbReference type="KEGG" id="ecs:ECs_4210"/>
<dbReference type="PATRIC" id="fig|386585.9.peg.4394"/>
<dbReference type="eggNOG" id="COG4992">
    <property type="taxonomic scope" value="Bacteria"/>
</dbReference>
<dbReference type="HOGENOM" id="CLU_016922_10_1_6"/>
<dbReference type="OMA" id="MVPGFKY"/>
<dbReference type="UniPathway" id="UPA00034">
    <property type="reaction ID" value="UER00020"/>
</dbReference>
<dbReference type="UniPathway" id="UPA00068">
    <property type="reaction ID" value="UER00109"/>
</dbReference>
<dbReference type="Proteomes" id="UP000000558">
    <property type="component" value="Chromosome"/>
</dbReference>
<dbReference type="Proteomes" id="UP000002519">
    <property type="component" value="Chromosome"/>
</dbReference>
<dbReference type="GO" id="GO:0005737">
    <property type="term" value="C:cytoplasm"/>
    <property type="evidence" value="ECO:0007669"/>
    <property type="project" value="UniProtKB-SubCell"/>
</dbReference>
<dbReference type="GO" id="GO:0042802">
    <property type="term" value="F:identical protein binding"/>
    <property type="evidence" value="ECO:0007669"/>
    <property type="project" value="TreeGrafter"/>
</dbReference>
<dbReference type="GO" id="GO:0003992">
    <property type="term" value="F:N2-acetyl-L-ornithine:2-oxoglutarate 5-aminotransferase activity"/>
    <property type="evidence" value="ECO:0007669"/>
    <property type="project" value="UniProtKB-UniRule"/>
</dbReference>
<dbReference type="GO" id="GO:0030170">
    <property type="term" value="F:pyridoxal phosphate binding"/>
    <property type="evidence" value="ECO:0007669"/>
    <property type="project" value="InterPro"/>
</dbReference>
<dbReference type="GO" id="GO:0009016">
    <property type="term" value="F:succinyldiaminopimelate transaminase activity"/>
    <property type="evidence" value="ECO:0007669"/>
    <property type="project" value="UniProtKB-UniRule"/>
</dbReference>
<dbReference type="GO" id="GO:0006526">
    <property type="term" value="P:L-arginine biosynthetic process"/>
    <property type="evidence" value="ECO:0007669"/>
    <property type="project" value="UniProtKB-UniRule"/>
</dbReference>
<dbReference type="GO" id="GO:0009089">
    <property type="term" value="P:lysine biosynthetic process via diaminopimelate"/>
    <property type="evidence" value="ECO:0007669"/>
    <property type="project" value="UniProtKB-UniRule"/>
</dbReference>
<dbReference type="CDD" id="cd00610">
    <property type="entry name" value="OAT_like"/>
    <property type="match status" value="1"/>
</dbReference>
<dbReference type="FunFam" id="3.40.640.10:FF:000004">
    <property type="entry name" value="Acetylornithine aminotransferase"/>
    <property type="match status" value="1"/>
</dbReference>
<dbReference type="FunFam" id="3.90.1150.10:FF:000009">
    <property type="entry name" value="Succinylornithine transaminase"/>
    <property type="match status" value="1"/>
</dbReference>
<dbReference type="Gene3D" id="3.90.1150.10">
    <property type="entry name" value="Aspartate Aminotransferase, domain 1"/>
    <property type="match status" value="1"/>
</dbReference>
<dbReference type="Gene3D" id="3.40.640.10">
    <property type="entry name" value="Type I PLP-dependent aspartate aminotransferase-like (Major domain)"/>
    <property type="match status" value="1"/>
</dbReference>
<dbReference type="HAMAP" id="MF_01107">
    <property type="entry name" value="ArgD_aminotrans_3"/>
    <property type="match status" value="1"/>
</dbReference>
<dbReference type="InterPro" id="IPR017652">
    <property type="entry name" value="Ac/SucOrn_transaminase_bac"/>
</dbReference>
<dbReference type="InterPro" id="IPR004636">
    <property type="entry name" value="AcOrn/SuccOrn_fam"/>
</dbReference>
<dbReference type="InterPro" id="IPR005814">
    <property type="entry name" value="Aminotrans_3"/>
</dbReference>
<dbReference type="InterPro" id="IPR049704">
    <property type="entry name" value="Aminotrans_3_PPA_site"/>
</dbReference>
<dbReference type="InterPro" id="IPR050103">
    <property type="entry name" value="Class-III_PLP-dep_AT"/>
</dbReference>
<dbReference type="InterPro" id="IPR015424">
    <property type="entry name" value="PyrdxlP-dep_Trfase"/>
</dbReference>
<dbReference type="InterPro" id="IPR015421">
    <property type="entry name" value="PyrdxlP-dep_Trfase_major"/>
</dbReference>
<dbReference type="InterPro" id="IPR015422">
    <property type="entry name" value="PyrdxlP-dep_Trfase_small"/>
</dbReference>
<dbReference type="NCBIfam" id="TIGR03246">
    <property type="entry name" value="arg_catab_astC"/>
    <property type="match status" value="1"/>
</dbReference>
<dbReference type="NCBIfam" id="TIGR00707">
    <property type="entry name" value="argD"/>
    <property type="match status" value="1"/>
</dbReference>
<dbReference type="NCBIfam" id="NF002325">
    <property type="entry name" value="PRK01278.1"/>
    <property type="match status" value="1"/>
</dbReference>
<dbReference type="NCBIfam" id="NF003468">
    <property type="entry name" value="PRK05093.1"/>
    <property type="match status" value="1"/>
</dbReference>
<dbReference type="NCBIfam" id="NF009047">
    <property type="entry name" value="PRK12381.1"/>
    <property type="match status" value="1"/>
</dbReference>
<dbReference type="PANTHER" id="PTHR11986:SF122">
    <property type="entry name" value="ACETYLORNITHINE_SUCCINYLDIAMINOPIMELATE AMINOTRANSFERASE"/>
    <property type="match status" value="1"/>
</dbReference>
<dbReference type="PANTHER" id="PTHR11986">
    <property type="entry name" value="AMINOTRANSFERASE CLASS III"/>
    <property type="match status" value="1"/>
</dbReference>
<dbReference type="Pfam" id="PF00202">
    <property type="entry name" value="Aminotran_3"/>
    <property type="match status" value="1"/>
</dbReference>
<dbReference type="PIRSF" id="PIRSF000521">
    <property type="entry name" value="Transaminase_4ab_Lys_Orn"/>
    <property type="match status" value="1"/>
</dbReference>
<dbReference type="SUPFAM" id="SSF53383">
    <property type="entry name" value="PLP-dependent transferases"/>
    <property type="match status" value="1"/>
</dbReference>
<dbReference type="PROSITE" id="PS00600">
    <property type="entry name" value="AA_TRANSFER_CLASS_3"/>
    <property type="match status" value="1"/>
</dbReference>
<reference key="1">
    <citation type="journal article" date="2001" name="Nature">
        <title>Genome sequence of enterohaemorrhagic Escherichia coli O157:H7.</title>
        <authorList>
            <person name="Perna N.T."/>
            <person name="Plunkett G. III"/>
            <person name="Burland V."/>
            <person name="Mau B."/>
            <person name="Glasner J.D."/>
            <person name="Rose D.J."/>
            <person name="Mayhew G.F."/>
            <person name="Evans P.S."/>
            <person name="Gregor J."/>
            <person name="Kirkpatrick H.A."/>
            <person name="Posfai G."/>
            <person name="Hackett J."/>
            <person name="Klink S."/>
            <person name="Boutin A."/>
            <person name="Shao Y."/>
            <person name="Miller L."/>
            <person name="Grotbeck E.J."/>
            <person name="Davis N.W."/>
            <person name="Lim A."/>
            <person name="Dimalanta E.T."/>
            <person name="Potamousis K."/>
            <person name="Apodaca J."/>
            <person name="Anantharaman T.S."/>
            <person name="Lin J."/>
            <person name="Yen G."/>
            <person name="Schwartz D.C."/>
            <person name="Welch R.A."/>
            <person name="Blattner F.R."/>
        </authorList>
    </citation>
    <scope>NUCLEOTIDE SEQUENCE [LARGE SCALE GENOMIC DNA]</scope>
    <source>
        <strain>O157:H7 / EDL933 / ATCC 700927 / EHEC</strain>
    </source>
</reference>
<reference key="2">
    <citation type="journal article" date="2001" name="DNA Res.">
        <title>Complete genome sequence of enterohemorrhagic Escherichia coli O157:H7 and genomic comparison with a laboratory strain K-12.</title>
        <authorList>
            <person name="Hayashi T."/>
            <person name="Makino K."/>
            <person name="Ohnishi M."/>
            <person name="Kurokawa K."/>
            <person name="Ishii K."/>
            <person name="Yokoyama K."/>
            <person name="Han C.-G."/>
            <person name="Ohtsubo E."/>
            <person name="Nakayama K."/>
            <person name="Murata T."/>
            <person name="Tanaka M."/>
            <person name="Tobe T."/>
            <person name="Iida T."/>
            <person name="Takami H."/>
            <person name="Honda T."/>
            <person name="Sasakawa C."/>
            <person name="Ogasawara N."/>
            <person name="Yasunaga T."/>
            <person name="Kuhara S."/>
            <person name="Shiba T."/>
            <person name="Hattori M."/>
            <person name="Shinagawa H."/>
        </authorList>
    </citation>
    <scope>NUCLEOTIDE SEQUENCE [LARGE SCALE GENOMIC DNA]</scope>
    <source>
        <strain>O157:H7 / Sakai / RIMD 0509952 / EHEC</strain>
    </source>
</reference>
<evidence type="ECO:0000250" key="1"/>
<evidence type="ECO:0000255" key="2">
    <source>
        <dbReference type="HAMAP-Rule" id="MF_01107"/>
    </source>
</evidence>
<gene>
    <name evidence="2" type="primary">argD</name>
    <name evidence="2" type="synonym">dapC</name>
    <name type="ordered locus">Z4720</name>
    <name type="ordered locus">ECs4210</name>
</gene>
<proteinExistence type="inferred from homology"/>
<comment type="function">
    <text evidence="2">Involved in both the arginine and lysine biosynthetic pathways.</text>
</comment>
<comment type="catalytic activity">
    <reaction evidence="2">
        <text>N(2)-acetyl-L-ornithine + 2-oxoglutarate = N-acetyl-L-glutamate 5-semialdehyde + L-glutamate</text>
        <dbReference type="Rhea" id="RHEA:18049"/>
        <dbReference type="ChEBI" id="CHEBI:16810"/>
        <dbReference type="ChEBI" id="CHEBI:29123"/>
        <dbReference type="ChEBI" id="CHEBI:29985"/>
        <dbReference type="ChEBI" id="CHEBI:57805"/>
        <dbReference type="EC" id="2.6.1.11"/>
    </reaction>
</comment>
<comment type="catalytic activity">
    <reaction evidence="2">
        <text>N-succinyl-(2S,6S)-2,6-diaminopimelate + 2-oxoglutarate = (S)-2-succinylamino-6-oxoheptanedioate + L-glutamate</text>
        <dbReference type="Rhea" id="RHEA:11960"/>
        <dbReference type="ChEBI" id="CHEBI:15685"/>
        <dbReference type="ChEBI" id="CHEBI:16810"/>
        <dbReference type="ChEBI" id="CHEBI:29985"/>
        <dbReference type="ChEBI" id="CHEBI:58087"/>
        <dbReference type="EC" id="2.6.1.17"/>
    </reaction>
</comment>
<comment type="cofactor">
    <cofactor evidence="2">
        <name>pyridoxal 5'-phosphate</name>
        <dbReference type="ChEBI" id="CHEBI:597326"/>
    </cofactor>
    <text evidence="2">Binds 1 pyridoxal phosphate per subunit.</text>
</comment>
<comment type="pathway">
    <text evidence="2">Amino-acid biosynthesis; L-arginine biosynthesis; N(2)-acetyl-L-ornithine from L-glutamate: step 4/4.</text>
</comment>
<comment type="pathway">
    <text evidence="2">Amino-acid biosynthesis; L-lysine biosynthesis via DAP pathway; LL-2,6-diaminopimelate from (S)-tetrahydrodipicolinate (succinylase route): step 2/3.</text>
</comment>
<comment type="subunit">
    <text evidence="2">Homodimer.</text>
</comment>
<comment type="subcellular location">
    <subcellularLocation>
        <location evidence="2">Cytoplasm</location>
    </subcellularLocation>
</comment>
<comment type="miscellaneous">
    <text evidence="1">The reaction catalyzed by ACOAT is highly reversible. This enzyme may also transaminate ornithine (By similarity).</text>
</comment>
<comment type="similarity">
    <text evidence="2">Belongs to the class-III pyridoxal-phosphate-dependent aminotransferase family. ArgD subfamily.</text>
</comment>
<organism>
    <name type="scientific">Escherichia coli O157:H7</name>
    <dbReference type="NCBI Taxonomy" id="83334"/>
    <lineage>
        <taxon>Bacteria</taxon>
        <taxon>Pseudomonadati</taxon>
        <taxon>Pseudomonadota</taxon>
        <taxon>Gammaproteobacteria</taxon>
        <taxon>Enterobacterales</taxon>
        <taxon>Enterobacteriaceae</taxon>
        <taxon>Escherichia</taxon>
    </lineage>
</organism>
<keyword id="KW-0028">Amino-acid biosynthesis</keyword>
<keyword id="KW-0032">Aminotransferase</keyword>
<keyword id="KW-0055">Arginine biosynthesis</keyword>
<keyword id="KW-0963">Cytoplasm</keyword>
<keyword id="KW-0457">Lysine biosynthesis</keyword>
<keyword id="KW-0663">Pyridoxal phosphate</keyword>
<keyword id="KW-1185">Reference proteome</keyword>
<keyword id="KW-0808">Transferase</keyword>
<sequence>MAIEQTAITRATFDEVILPIYAPAEFIPVKGQGSRIWDQQGKEYVDFAGGIAVTALGHCHPALVNALKTQGETLWHISNVFTNEPALRLGRKLIEATFAERVVFMNSGTEANETAFKLARHYACVRHSPFKTKIIAFHNAFHGRSLFTVSVGGQPKYSDGFGPKPSDIIHVPFNDLHAVKAVMDDHTCAVVVEPIQGEGGVTAATPEFLQGLRELCDQHQALLVFDEVQCGMGRTGDLFAYMHYGVTPDILTSAKALGGGFPISAMLTTAEIASAFHPGSHGSTYGGNPLACAVAGAAFDIINTPEVLEGIQAKRQRFVDHLQKIDQQYDVFSDIRGMGLLIGAELKPQYKGQARDFLYAGAEAGVMVLNAGPDVMRFAPSLVVEDADIDEGMQRFAHAVAKVVGA</sequence>
<accession>Q8X4S6</accession>
<feature type="initiator methionine" description="Removed" evidence="1">
    <location>
        <position position="1"/>
    </location>
</feature>
<feature type="chain" id="PRO_0000112745" description="Acetylornithine/succinyldiaminopimelate aminotransferase">
    <location>
        <begin position="2"/>
        <end position="406"/>
    </location>
</feature>
<feature type="binding site" evidence="2">
    <location>
        <begin position="108"/>
        <end position="109"/>
    </location>
    <ligand>
        <name>pyridoxal 5'-phosphate</name>
        <dbReference type="ChEBI" id="CHEBI:597326"/>
    </ligand>
</feature>
<feature type="binding site" evidence="2">
    <location>
        <position position="141"/>
    </location>
    <ligand>
        <name>pyridoxal 5'-phosphate</name>
        <dbReference type="ChEBI" id="CHEBI:597326"/>
    </ligand>
</feature>
<feature type="binding site" evidence="2">
    <location>
        <position position="144"/>
    </location>
    <ligand>
        <name>N(2)-acetyl-L-ornithine</name>
        <dbReference type="ChEBI" id="CHEBI:57805"/>
    </ligand>
</feature>
<feature type="binding site" evidence="2">
    <location>
        <begin position="226"/>
        <end position="229"/>
    </location>
    <ligand>
        <name>pyridoxal 5'-phosphate</name>
        <dbReference type="ChEBI" id="CHEBI:597326"/>
    </ligand>
</feature>
<feature type="binding site" evidence="2">
    <location>
        <position position="283"/>
    </location>
    <ligand>
        <name>N(2)-acetyl-L-ornithine</name>
        <dbReference type="ChEBI" id="CHEBI:57805"/>
    </ligand>
</feature>
<feature type="binding site" evidence="2">
    <location>
        <position position="284"/>
    </location>
    <ligand>
        <name>pyridoxal 5'-phosphate</name>
        <dbReference type="ChEBI" id="CHEBI:597326"/>
    </ligand>
</feature>
<feature type="modified residue" description="N6-(pyridoxal phosphate)lysine" evidence="2">
    <location>
        <position position="255"/>
    </location>
</feature>
<protein>
    <recommendedName>
        <fullName evidence="2">Acetylornithine/succinyldiaminopimelate aminotransferase</fullName>
        <shortName evidence="2">ACOAT</shortName>
        <shortName evidence="2">DapATase</shortName>
        <shortName evidence="2">Succinyldiaminopimelate transferase</shortName>
        <ecNumber evidence="2">2.6.1.11</ecNumber>
        <ecNumber evidence="2">2.6.1.17</ecNumber>
    </recommendedName>
</protein>
<name>ARGD_ECO57</name>